<gene>
    <name evidence="6" type="primary">Ccdc25</name>
</gene>
<protein>
    <recommendedName>
        <fullName evidence="5">Coiled-coil domain-containing protein 25</fullName>
    </recommendedName>
</protein>
<sequence length="208" mass="24480">MVFYFTSSSVNSSTYTIYMGKDKYENEDLIKYGWPEDIWFHVDKLSSAHVYLRLQKGEKIEDIPKEVLMDCAHLVKANSIQGCKMNNVNVVYTPWSNLKKTADMDVGQIGFHRQKDVKIVTVEKKVNEILNRLEKTKLEKFPDLAAEKEGRDREERNEKKAQIQEMKRKEKEEMKKKREMDELRSYSSLMKVENMSSNQDGNDSDEFM</sequence>
<proteinExistence type="evidence at protein level"/>
<organism>
    <name type="scientific">Mus musculus</name>
    <name type="common">Mouse</name>
    <dbReference type="NCBI Taxonomy" id="10090"/>
    <lineage>
        <taxon>Eukaryota</taxon>
        <taxon>Metazoa</taxon>
        <taxon>Chordata</taxon>
        <taxon>Craniata</taxon>
        <taxon>Vertebrata</taxon>
        <taxon>Euteleostomi</taxon>
        <taxon>Mammalia</taxon>
        <taxon>Eutheria</taxon>
        <taxon>Euarchontoglires</taxon>
        <taxon>Glires</taxon>
        <taxon>Rodentia</taxon>
        <taxon>Myomorpha</taxon>
        <taxon>Muroidea</taxon>
        <taxon>Muridae</taxon>
        <taxon>Murinae</taxon>
        <taxon>Mus</taxon>
        <taxon>Mus</taxon>
    </lineage>
</organism>
<dbReference type="EMBL" id="AK012172">
    <property type="protein sequence ID" value="BAB28076.1"/>
    <property type="molecule type" value="mRNA"/>
</dbReference>
<dbReference type="EMBL" id="AK016286">
    <property type="protein sequence ID" value="BAB30178.1"/>
    <property type="molecule type" value="mRNA"/>
</dbReference>
<dbReference type="EMBL" id="AK078345">
    <property type="protein sequence ID" value="BAC37230.1"/>
    <property type="molecule type" value="mRNA"/>
</dbReference>
<dbReference type="EMBL" id="AK089982">
    <property type="protein sequence ID" value="BAC41026.1"/>
    <property type="molecule type" value="mRNA"/>
</dbReference>
<dbReference type="CCDS" id="CCDS27217.1"/>
<dbReference type="RefSeq" id="NP_666056.1">
    <property type="nucleotide sequence ID" value="NM_145944.5"/>
</dbReference>
<dbReference type="SMR" id="Q78PG9"/>
<dbReference type="FunCoup" id="Q78PG9">
    <property type="interactions" value="3716"/>
</dbReference>
<dbReference type="IntAct" id="Q78PG9">
    <property type="interactions" value="1"/>
</dbReference>
<dbReference type="MINT" id="Q78PG9"/>
<dbReference type="STRING" id="10090.ENSMUSP00000022614"/>
<dbReference type="iPTMnet" id="Q78PG9"/>
<dbReference type="PhosphoSitePlus" id="Q78PG9"/>
<dbReference type="SwissPalm" id="Q78PG9"/>
<dbReference type="CPTAC" id="non-CPTAC-3776"/>
<dbReference type="PaxDb" id="10090-ENSMUSP00000022614"/>
<dbReference type="ProteomicsDB" id="281497"/>
<dbReference type="Pumba" id="Q78PG9"/>
<dbReference type="Antibodypedia" id="10313">
    <property type="antibodies" value="94 antibodies from 22 providers"/>
</dbReference>
<dbReference type="Ensembl" id="ENSMUST00000022614.7">
    <property type="protein sequence ID" value="ENSMUSP00000022614.6"/>
    <property type="gene ID" value="ENSMUSG00000022035.7"/>
</dbReference>
<dbReference type="GeneID" id="67179"/>
<dbReference type="KEGG" id="mmu:67179"/>
<dbReference type="UCSC" id="uc007ujq.1">
    <property type="organism name" value="mouse"/>
</dbReference>
<dbReference type="AGR" id="MGI:1914429"/>
<dbReference type="CTD" id="55246"/>
<dbReference type="MGI" id="MGI:1914429">
    <property type="gene designation" value="Ccdc25"/>
</dbReference>
<dbReference type="VEuPathDB" id="HostDB:ENSMUSG00000022035"/>
<dbReference type="eggNOG" id="KOG3272">
    <property type="taxonomic scope" value="Eukaryota"/>
</dbReference>
<dbReference type="GeneTree" id="ENSGT00390000004380"/>
<dbReference type="HOGENOM" id="CLU_076656_0_1_1"/>
<dbReference type="InParanoid" id="Q78PG9"/>
<dbReference type="OMA" id="YHDEKAV"/>
<dbReference type="OrthoDB" id="200398at2759"/>
<dbReference type="PhylomeDB" id="Q78PG9"/>
<dbReference type="TreeFam" id="TF300013"/>
<dbReference type="BioGRID-ORCS" id="67179">
    <property type="hits" value="0 hits in 62 CRISPR screens"/>
</dbReference>
<dbReference type="ChiTaRS" id="Ccdc25">
    <property type="organism name" value="mouse"/>
</dbReference>
<dbReference type="PRO" id="PR:Q78PG9"/>
<dbReference type="Proteomes" id="UP000000589">
    <property type="component" value="Chromosome 14"/>
</dbReference>
<dbReference type="RNAct" id="Q78PG9">
    <property type="molecule type" value="protein"/>
</dbReference>
<dbReference type="Bgee" id="ENSMUSG00000022035">
    <property type="expression patterns" value="Expressed in jejunum and 64 other cell types or tissues"/>
</dbReference>
<dbReference type="ExpressionAtlas" id="Q78PG9">
    <property type="expression patterns" value="baseline and differential"/>
</dbReference>
<dbReference type="GO" id="GO:0012505">
    <property type="term" value="C:endomembrane system"/>
    <property type="evidence" value="ECO:0000250"/>
    <property type="project" value="UniProtKB"/>
</dbReference>
<dbReference type="GO" id="GO:0005886">
    <property type="term" value="C:plasma membrane"/>
    <property type="evidence" value="ECO:0000250"/>
    <property type="project" value="UniProtKB"/>
</dbReference>
<dbReference type="GO" id="GO:0003677">
    <property type="term" value="F:DNA binding"/>
    <property type="evidence" value="ECO:0000250"/>
    <property type="project" value="UniProtKB"/>
</dbReference>
<dbReference type="GO" id="GO:2000147">
    <property type="term" value="P:positive regulation of cell motility"/>
    <property type="evidence" value="ECO:0000250"/>
    <property type="project" value="UniProtKB"/>
</dbReference>
<dbReference type="InterPro" id="IPR039730">
    <property type="entry name" value="Jlp2/Ccd25"/>
</dbReference>
<dbReference type="InterPro" id="IPR008532">
    <property type="entry name" value="NFACT_RNA-bd"/>
</dbReference>
<dbReference type="PANTHER" id="PTHR13049:SF2">
    <property type="entry name" value="COILED-COIL DOMAIN-CONTAINING PROTEIN 25"/>
    <property type="match status" value="1"/>
</dbReference>
<dbReference type="PANTHER" id="PTHR13049">
    <property type="entry name" value="DUF814-RELATED"/>
    <property type="match status" value="1"/>
</dbReference>
<dbReference type="Pfam" id="PF05670">
    <property type="entry name" value="NFACT-R_1"/>
    <property type="match status" value="1"/>
</dbReference>
<name>CCD25_MOUSE</name>
<feature type="chain" id="PRO_0000233405" description="Coiled-coil domain-containing protein 25">
    <location>
        <begin position="1"/>
        <end position="208"/>
    </location>
</feature>
<feature type="topological domain" description="Extracellular" evidence="5">
    <location>
        <begin position="1"/>
        <end position="105"/>
    </location>
</feature>
<feature type="transmembrane region" description="Helical" evidence="2">
    <location>
        <begin position="106"/>
        <end position="122"/>
    </location>
</feature>
<feature type="topological domain" description="Cytoplasmic" evidence="5">
    <location>
        <begin position="123"/>
        <end position="208"/>
    </location>
</feature>
<feature type="region of interest" description="DNA-binding" evidence="1">
    <location>
        <begin position="21"/>
        <end position="25"/>
    </location>
</feature>
<feature type="region of interest" description="Disordered" evidence="3">
    <location>
        <begin position="144"/>
        <end position="208"/>
    </location>
</feature>
<feature type="coiled-coil region" evidence="2">
    <location>
        <begin position="117"/>
        <end position="187"/>
    </location>
</feature>
<feature type="compositionally biased region" description="Basic and acidic residues" evidence="3">
    <location>
        <begin position="144"/>
        <end position="184"/>
    </location>
</feature>
<feature type="modified residue" description="N6-acetyllysine" evidence="1">
    <location>
        <position position="23"/>
    </location>
</feature>
<feature type="modified residue" description="Phosphoserine" evidence="7 8">
    <location>
        <position position="204"/>
    </location>
</feature>
<feature type="sequence conflict" description="In Ref. 1; BAB30178." evidence="5" ref="1">
    <original>R</original>
    <variation>G</variation>
    <location>
        <position position="156"/>
    </location>
</feature>
<keyword id="KW-0007">Acetylation</keyword>
<keyword id="KW-1003">Cell membrane</keyword>
<keyword id="KW-0175">Coiled coil</keyword>
<keyword id="KW-0238">DNA-binding</keyword>
<keyword id="KW-0472">Membrane</keyword>
<keyword id="KW-0597">Phosphoprotein</keyword>
<keyword id="KW-1185">Reference proteome</keyword>
<keyword id="KW-0812">Transmembrane</keyword>
<keyword id="KW-1133">Transmembrane helix</keyword>
<comment type="function">
    <text evidence="1">Transmembrane receptor that senses neutrophil extracellular traps (NETs) and triggers the ILK-PARVB pathway to enhance cell motility. NETs are mainly composed of DNA fibers and are released by neutrophils to bind pathogens during inflammation (By similarity). Formation of NETs is also associated with cancer metastasis, NET-DNA acting as a chemotactic factor to attract cancer cells (By similarity). Specifically binds NETs on its extracellular region, in particular the 8-OHdG-enriched DNA present in NETs, and recruits ILK, initiating the ILK-PARVB cascade to induce cytoskeleton rearrangement and directional migration of cells (By similarity). In the context of cancer, promotes cancer metastasis by sensing NETs and promoting migration of tumor cells (By similarity).</text>
</comment>
<comment type="subunit">
    <text evidence="1">Interacts (via cytoplasmic region) with ILK.</text>
</comment>
<comment type="subcellular location">
    <subcellularLocation>
        <location evidence="1">Cell membrane</location>
        <topology evidence="1">Single-pass membrane protein</topology>
    </subcellularLocation>
    <subcellularLocation>
        <location evidence="1">Endomembrane system</location>
    </subcellularLocation>
    <text evidence="1">Localizes to cytoplasmic membrane in tumor cells.</text>
</comment>
<comment type="disruption phenotype">
    <text evidence="4">In the context of cancer, mice display reduced metastase formation, without affecting primary tumor growth.</text>
</comment>
<comment type="similarity">
    <text evidence="5">Belongs to the CCDC25 family.</text>
</comment>
<reference key="1">
    <citation type="journal article" date="2005" name="Science">
        <title>The transcriptional landscape of the mammalian genome.</title>
        <authorList>
            <person name="Carninci P."/>
            <person name="Kasukawa T."/>
            <person name="Katayama S."/>
            <person name="Gough J."/>
            <person name="Frith M.C."/>
            <person name="Maeda N."/>
            <person name="Oyama R."/>
            <person name="Ravasi T."/>
            <person name="Lenhard B."/>
            <person name="Wells C."/>
            <person name="Kodzius R."/>
            <person name="Shimokawa K."/>
            <person name="Bajic V.B."/>
            <person name="Brenner S.E."/>
            <person name="Batalov S."/>
            <person name="Forrest A.R."/>
            <person name="Zavolan M."/>
            <person name="Davis M.J."/>
            <person name="Wilming L.G."/>
            <person name="Aidinis V."/>
            <person name="Allen J.E."/>
            <person name="Ambesi-Impiombato A."/>
            <person name="Apweiler R."/>
            <person name="Aturaliya R.N."/>
            <person name="Bailey T.L."/>
            <person name="Bansal M."/>
            <person name="Baxter L."/>
            <person name="Beisel K.W."/>
            <person name="Bersano T."/>
            <person name="Bono H."/>
            <person name="Chalk A.M."/>
            <person name="Chiu K.P."/>
            <person name="Choudhary V."/>
            <person name="Christoffels A."/>
            <person name="Clutterbuck D.R."/>
            <person name="Crowe M.L."/>
            <person name="Dalla E."/>
            <person name="Dalrymple B.P."/>
            <person name="de Bono B."/>
            <person name="Della Gatta G."/>
            <person name="di Bernardo D."/>
            <person name="Down T."/>
            <person name="Engstrom P."/>
            <person name="Fagiolini M."/>
            <person name="Faulkner G."/>
            <person name="Fletcher C.F."/>
            <person name="Fukushima T."/>
            <person name="Furuno M."/>
            <person name="Futaki S."/>
            <person name="Gariboldi M."/>
            <person name="Georgii-Hemming P."/>
            <person name="Gingeras T.R."/>
            <person name="Gojobori T."/>
            <person name="Green R.E."/>
            <person name="Gustincich S."/>
            <person name="Harbers M."/>
            <person name="Hayashi Y."/>
            <person name="Hensch T.K."/>
            <person name="Hirokawa N."/>
            <person name="Hill D."/>
            <person name="Huminiecki L."/>
            <person name="Iacono M."/>
            <person name="Ikeo K."/>
            <person name="Iwama A."/>
            <person name="Ishikawa T."/>
            <person name="Jakt M."/>
            <person name="Kanapin A."/>
            <person name="Katoh M."/>
            <person name="Kawasawa Y."/>
            <person name="Kelso J."/>
            <person name="Kitamura H."/>
            <person name="Kitano H."/>
            <person name="Kollias G."/>
            <person name="Krishnan S.P."/>
            <person name="Kruger A."/>
            <person name="Kummerfeld S.K."/>
            <person name="Kurochkin I.V."/>
            <person name="Lareau L.F."/>
            <person name="Lazarevic D."/>
            <person name="Lipovich L."/>
            <person name="Liu J."/>
            <person name="Liuni S."/>
            <person name="McWilliam S."/>
            <person name="Madan Babu M."/>
            <person name="Madera M."/>
            <person name="Marchionni L."/>
            <person name="Matsuda H."/>
            <person name="Matsuzawa S."/>
            <person name="Miki H."/>
            <person name="Mignone F."/>
            <person name="Miyake S."/>
            <person name="Morris K."/>
            <person name="Mottagui-Tabar S."/>
            <person name="Mulder N."/>
            <person name="Nakano N."/>
            <person name="Nakauchi H."/>
            <person name="Ng P."/>
            <person name="Nilsson R."/>
            <person name="Nishiguchi S."/>
            <person name="Nishikawa S."/>
            <person name="Nori F."/>
            <person name="Ohara O."/>
            <person name="Okazaki Y."/>
            <person name="Orlando V."/>
            <person name="Pang K.C."/>
            <person name="Pavan W.J."/>
            <person name="Pavesi G."/>
            <person name="Pesole G."/>
            <person name="Petrovsky N."/>
            <person name="Piazza S."/>
            <person name="Reed J."/>
            <person name="Reid J.F."/>
            <person name="Ring B.Z."/>
            <person name="Ringwald M."/>
            <person name="Rost B."/>
            <person name="Ruan Y."/>
            <person name="Salzberg S.L."/>
            <person name="Sandelin A."/>
            <person name="Schneider C."/>
            <person name="Schoenbach C."/>
            <person name="Sekiguchi K."/>
            <person name="Semple C.A."/>
            <person name="Seno S."/>
            <person name="Sessa L."/>
            <person name="Sheng Y."/>
            <person name="Shibata Y."/>
            <person name="Shimada H."/>
            <person name="Shimada K."/>
            <person name="Silva D."/>
            <person name="Sinclair B."/>
            <person name="Sperling S."/>
            <person name="Stupka E."/>
            <person name="Sugiura K."/>
            <person name="Sultana R."/>
            <person name="Takenaka Y."/>
            <person name="Taki K."/>
            <person name="Tammoja K."/>
            <person name="Tan S.L."/>
            <person name="Tang S."/>
            <person name="Taylor M.S."/>
            <person name="Tegner J."/>
            <person name="Teichmann S.A."/>
            <person name="Ueda H.R."/>
            <person name="van Nimwegen E."/>
            <person name="Verardo R."/>
            <person name="Wei C.L."/>
            <person name="Yagi K."/>
            <person name="Yamanishi H."/>
            <person name="Zabarovsky E."/>
            <person name="Zhu S."/>
            <person name="Zimmer A."/>
            <person name="Hide W."/>
            <person name="Bult C."/>
            <person name="Grimmond S.M."/>
            <person name="Teasdale R.D."/>
            <person name="Liu E.T."/>
            <person name="Brusic V."/>
            <person name="Quackenbush J."/>
            <person name="Wahlestedt C."/>
            <person name="Mattick J.S."/>
            <person name="Hume D.A."/>
            <person name="Kai C."/>
            <person name="Sasaki D."/>
            <person name="Tomaru Y."/>
            <person name="Fukuda S."/>
            <person name="Kanamori-Katayama M."/>
            <person name="Suzuki M."/>
            <person name="Aoki J."/>
            <person name="Arakawa T."/>
            <person name="Iida J."/>
            <person name="Imamura K."/>
            <person name="Itoh M."/>
            <person name="Kato T."/>
            <person name="Kawaji H."/>
            <person name="Kawagashira N."/>
            <person name="Kawashima T."/>
            <person name="Kojima M."/>
            <person name="Kondo S."/>
            <person name="Konno H."/>
            <person name="Nakano K."/>
            <person name="Ninomiya N."/>
            <person name="Nishio T."/>
            <person name="Okada M."/>
            <person name="Plessy C."/>
            <person name="Shibata K."/>
            <person name="Shiraki T."/>
            <person name="Suzuki S."/>
            <person name="Tagami M."/>
            <person name="Waki K."/>
            <person name="Watahiki A."/>
            <person name="Okamura-Oho Y."/>
            <person name="Suzuki H."/>
            <person name="Kawai J."/>
            <person name="Hayashizaki Y."/>
        </authorList>
    </citation>
    <scope>NUCLEOTIDE SEQUENCE [LARGE SCALE MRNA]</scope>
    <source>
        <strain>C57BL/6J</strain>
        <tissue>Cerebellum</tissue>
        <tissue>Kidney</tissue>
    </source>
</reference>
<reference key="2">
    <citation type="journal article" date="2004" name="Mol. Cell. Proteomics">
        <title>Phosphoproteomic analysis of the developing mouse brain.</title>
        <authorList>
            <person name="Ballif B.A."/>
            <person name="Villen J."/>
            <person name="Beausoleil S.A."/>
            <person name="Schwartz D."/>
            <person name="Gygi S.P."/>
        </authorList>
    </citation>
    <scope>PHOSPHORYLATION [LARGE SCALE ANALYSIS] AT SER-204</scope>
    <scope>IDENTIFICATION BY MASS SPECTROMETRY [LARGE SCALE ANALYSIS]</scope>
    <source>
        <tissue>Embryonic brain</tissue>
    </source>
</reference>
<reference key="3">
    <citation type="journal article" date="2010" name="Cell">
        <title>A tissue-specific atlas of mouse protein phosphorylation and expression.</title>
        <authorList>
            <person name="Huttlin E.L."/>
            <person name="Jedrychowski M.P."/>
            <person name="Elias J.E."/>
            <person name="Goswami T."/>
            <person name="Rad R."/>
            <person name="Beausoleil S.A."/>
            <person name="Villen J."/>
            <person name="Haas W."/>
            <person name="Sowa M.E."/>
            <person name="Gygi S.P."/>
        </authorList>
    </citation>
    <scope>PHOSPHORYLATION [LARGE SCALE ANALYSIS] AT SER-204</scope>
    <scope>IDENTIFICATION BY MASS SPECTROMETRY [LARGE SCALE ANALYSIS]</scope>
    <source>
        <tissue>Brain</tissue>
        <tissue>Brown adipose tissue</tissue>
        <tissue>Heart</tissue>
        <tissue>Kidney</tissue>
        <tissue>Liver</tissue>
        <tissue>Lung</tissue>
        <tissue>Pancreas</tissue>
        <tissue>Spleen</tissue>
    </source>
</reference>
<reference key="4">
    <citation type="journal article" date="2020" name="Nature">
        <title>DNA of neutrophil extracellular traps promotes cancer metastasis via CCDC25.</title>
        <authorList>
            <person name="Yang L."/>
            <person name="Liu Q."/>
            <person name="Zhang X."/>
            <person name="Liu X."/>
            <person name="Zhou B."/>
            <person name="Chen J."/>
            <person name="Huang D."/>
            <person name="Li J."/>
            <person name="Li H."/>
            <person name="Chen F."/>
            <person name="Liu J."/>
            <person name="Xing Y."/>
            <person name="Chen X."/>
            <person name="Su S."/>
            <person name="Song E."/>
        </authorList>
    </citation>
    <scope>DISRUPTION PHENOTYPE</scope>
</reference>
<accession>Q78PG9</accession>
<accession>Q9CSQ8</accession>
<accession>Q9CUF8</accession>
<evidence type="ECO:0000250" key="1">
    <source>
        <dbReference type="UniProtKB" id="Q86WR0"/>
    </source>
</evidence>
<evidence type="ECO:0000255" key="2"/>
<evidence type="ECO:0000256" key="3">
    <source>
        <dbReference type="SAM" id="MobiDB-lite"/>
    </source>
</evidence>
<evidence type="ECO:0000269" key="4">
    <source>
    </source>
</evidence>
<evidence type="ECO:0000305" key="5"/>
<evidence type="ECO:0000312" key="6">
    <source>
        <dbReference type="MGI" id="MGI:1914429"/>
    </source>
</evidence>
<evidence type="ECO:0007744" key="7">
    <source>
    </source>
</evidence>
<evidence type="ECO:0007744" key="8">
    <source>
    </source>
</evidence>